<feature type="signal peptide" evidence="3">
    <location>
        <begin position="1"/>
        <end position="19"/>
    </location>
</feature>
<feature type="chain" id="PRO_0000021672" description="Mercuric transport protein periplasmic component">
    <location>
        <begin position="20"/>
        <end position="91"/>
    </location>
</feature>
<feature type="domain" description="HMA" evidence="4">
    <location>
        <begin position="22"/>
        <end position="88"/>
    </location>
</feature>
<feature type="binding site" evidence="4">
    <location>
        <position position="33"/>
    </location>
    <ligand>
        <name>Hg(2+)</name>
        <dbReference type="ChEBI" id="CHEBI:16793"/>
    </ligand>
</feature>
<feature type="binding site" evidence="4">
    <location>
        <position position="36"/>
    </location>
    <ligand>
        <name>Hg(2+)</name>
        <dbReference type="ChEBI" id="CHEBI:16793"/>
    </ligand>
</feature>
<keyword id="KW-0475">Mercuric resistance</keyword>
<keyword id="KW-0476">Mercury</keyword>
<keyword id="KW-0479">Metal-binding</keyword>
<keyword id="KW-0574">Periplasm</keyword>
<keyword id="KW-0614">Plasmid</keyword>
<keyword id="KW-0732">Signal</keyword>
<reference key="1">
    <citation type="journal article" date="1997" name="Mol. Microbiol.">
        <title>Intercontinental spread of promiscuous mercury-resistance transposons in environmental bacteria.</title>
        <authorList>
            <person name="Yurieva O."/>
            <person name="Kholodii G."/>
            <person name="Minakhin L."/>
            <person name="Gorlenko Z."/>
            <person name="Kalyaeva E."/>
            <person name="Mindlin S."/>
            <person name="Nikiforov V."/>
        </authorList>
    </citation>
    <scope>NUCLEOTIDE SEQUENCE [GENOMIC DNA]</scope>
    <source>
        <strain>KH72</strain>
    </source>
</reference>
<gene>
    <name type="primary">merP</name>
</gene>
<name>MERP_ENTAG</name>
<sequence>MKKLFAALALAAVVAPVWAATQTVTLSVPGMTCASCPITVKHALSKVEGVSKTDVSFDKRQAVVTFDDAKTNVQKLTKATEDAGYPSSLKR</sequence>
<protein>
    <recommendedName>
        <fullName evidence="1">Mercuric transport protein periplasmic component</fullName>
    </recommendedName>
    <alternativeName>
        <fullName evidence="1">Mercury scavenger protein</fullName>
    </alternativeName>
    <alternativeName>
        <fullName evidence="1">Periplasmic mercury ion-binding protein</fullName>
    </alternativeName>
</protein>
<comment type="function">
    <text evidence="1">Involved in mercury resistance. Acts as a mercury scavenger that specifically binds to a mercuric ion in the periplasm and probably passes it to the cytoplasmic mercuric reductase MerA via the mercuric transport protein MerT.</text>
</comment>
<comment type="subunit">
    <text evidence="2">Monomer.</text>
</comment>
<comment type="subcellular location">
    <subcellularLocation>
        <location evidence="2">Periplasm</location>
    </subcellularLocation>
</comment>
<comment type="similarity">
    <text evidence="5">Belongs to the MerP family.</text>
</comment>
<dbReference type="EMBL" id="Y08992">
    <property type="protein sequence ID" value="CAA70182.1"/>
    <property type="molecule type" value="Genomic_DNA"/>
</dbReference>
<dbReference type="SMR" id="P0A217"/>
<dbReference type="GO" id="GO:0042597">
    <property type="term" value="C:periplasmic space"/>
    <property type="evidence" value="ECO:0007669"/>
    <property type="project" value="UniProtKB-SubCell"/>
</dbReference>
<dbReference type="GO" id="GO:0045340">
    <property type="term" value="F:mercury ion binding"/>
    <property type="evidence" value="ECO:0007669"/>
    <property type="project" value="InterPro"/>
</dbReference>
<dbReference type="GO" id="GO:0015097">
    <property type="term" value="F:mercury ion transmembrane transporter activity"/>
    <property type="evidence" value="ECO:0007669"/>
    <property type="project" value="InterPro"/>
</dbReference>
<dbReference type="CDD" id="cd00371">
    <property type="entry name" value="HMA"/>
    <property type="match status" value="1"/>
</dbReference>
<dbReference type="FunFam" id="3.30.70.100:FF:000005">
    <property type="entry name" value="Copper-exporting P-type ATPase A"/>
    <property type="match status" value="1"/>
</dbReference>
<dbReference type="Gene3D" id="3.30.70.100">
    <property type="match status" value="1"/>
</dbReference>
<dbReference type="InterPro" id="IPR017969">
    <property type="entry name" value="Heavy-metal-associated_CS"/>
</dbReference>
<dbReference type="InterPro" id="IPR006121">
    <property type="entry name" value="HMA_dom"/>
</dbReference>
<dbReference type="InterPro" id="IPR036163">
    <property type="entry name" value="HMA_dom_sf"/>
</dbReference>
<dbReference type="InterPro" id="IPR011795">
    <property type="entry name" value="MerP"/>
</dbReference>
<dbReference type="InterPro" id="IPR001802">
    <property type="entry name" value="MerP/CopZ"/>
</dbReference>
<dbReference type="NCBIfam" id="TIGR02052">
    <property type="entry name" value="MerP"/>
    <property type="match status" value="1"/>
</dbReference>
<dbReference type="PANTHER" id="PTHR46594">
    <property type="entry name" value="P-TYPE CATION-TRANSPORTING ATPASE"/>
    <property type="match status" value="1"/>
</dbReference>
<dbReference type="PANTHER" id="PTHR46594:SF4">
    <property type="entry name" value="P-TYPE CATION-TRANSPORTING ATPASE"/>
    <property type="match status" value="1"/>
</dbReference>
<dbReference type="Pfam" id="PF00403">
    <property type="entry name" value="HMA"/>
    <property type="match status" value="1"/>
</dbReference>
<dbReference type="PRINTS" id="PR00946">
    <property type="entry name" value="HGSCAVENGER"/>
</dbReference>
<dbReference type="SUPFAM" id="SSF55008">
    <property type="entry name" value="HMA, heavy metal-associated domain"/>
    <property type="match status" value="1"/>
</dbReference>
<dbReference type="PROSITE" id="PS01047">
    <property type="entry name" value="HMA_1"/>
    <property type="match status" value="1"/>
</dbReference>
<dbReference type="PROSITE" id="PS50846">
    <property type="entry name" value="HMA_2"/>
    <property type="match status" value="1"/>
</dbReference>
<organism>
    <name type="scientific">Enterobacter agglomerans</name>
    <name type="common">Erwinia herbicola</name>
    <name type="synonym">Pantoea agglomerans</name>
    <dbReference type="NCBI Taxonomy" id="549"/>
    <lineage>
        <taxon>Bacteria</taxon>
        <taxon>Pseudomonadati</taxon>
        <taxon>Pseudomonadota</taxon>
        <taxon>Gammaproteobacteria</taxon>
        <taxon>Enterobacterales</taxon>
        <taxon>Erwiniaceae</taxon>
        <taxon>Pantoea</taxon>
        <taxon>Pantoea agglomerans group</taxon>
    </lineage>
</organism>
<proteinExistence type="inferred from homology"/>
<accession>P0A217</accession>
<accession>O08125</accession>
<accession>P94701</accession>
<geneLocation type="plasmid">
    <name>pKLH272</name>
</geneLocation>
<evidence type="ECO:0000250" key="1">
    <source>
        <dbReference type="UniProtKB" id="P04129"/>
    </source>
</evidence>
<evidence type="ECO:0000250" key="2">
    <source>
        <dbReference type="UniProtKB" id="P13113"/>
    </source>
</evidence>
<evidence type="ECO:0000255" key="3"/>
<evidence type="ECO:0000255" key="4">
    <source>
        <dbReference type="PROSITE-ProRule" id="PRU00280"/>
    </source>
</evidence>
<evidence type="ECO:0000305" key="5"/>